<name>ETXG_STAAU</name>
<proteinExistence type="evidence at protein level"/>
<organism>
    <name type="scientific">Staphylococcus aureus</name>
    <dbReference type="NCBI Taxonomy" id="1280"/>
    <lineage>
        <taxon>Bacteria</taxon>
        <taxon>Bacillati</taxon>
        <taxon>Bacillota</taxon>
        <taxon>Bacilli</taxon>
        <taxon>Bacillales</taxon>
        <taxon>Staphylococcaceae</taxon>
        <taxon>Staphylococcus</taxon>
    </lineage>
</organism>
<comment type="function">
    <text>Staphylococcal enterotoxins cause the intoxication staphylococcal food poisoning syndrome. The illness is characterized by high fever, hypotension, diarrhea, shock, and in some cases death.</text>
</comment>
<comment type="subcellular location">
    <subcellularLocation>
        <location>Secreted</location>
    </subcellularLocation>
</comment>
<comment type="similarity">
    <text evidence="2">Belongs to the staphylococcal/streptococcal toxin family.</text>
</comment>
<accession>P0A0L8</accession>
<accession>O85382</accession>
<accession>Q52T98</accession>
<sequence>MKKLSTVIIILILEIVFHNMNYVNAQPDPKLDELNKVSDYKNNKGTMGNVMNLYTSPPVEGRGVINSRQFLSHDLIFPIEYKSYNEVKTELENTELANNYKDKKVDIFGVPYFYTCIIPKSEPDINQNFGGCCMYGGLTFNSSENERDKLITVQVTIDNRQSLGFTITTNKNMVTIQELDYKARHWLTKEKKLYEFDGSAFESGYIKFTEKNNTSFWFDLFPKKELVPFVPYKFLNIYGDNKVVDSKSIKMEVFLNTH</sequence>
<keyword id="KW-0002">3D-structure</keyword>
<keyword id="KW-0903">Direct protein sequencing</keyword>
<keyword id="KW-1015">Disulfide bond</keyword>
<keyword id="KW-0260">Enterotoxin</keyword>
<keyword id="KW-0964">Secreted</keyword>
<keyword id="KW-0732">Signal</keyword>
<keyword id="KW-0766">Superantigen</keyword>
<keyword id="KW-0800">Toxin</keyword>
<keyword id="KW-0843">Virulence</keyword>
<feature type="signal peptide">
    <location>
        <begin position="1"/>
        <end position="25"/>
    </location>
</feature>
<feature type="chain" id="PRO_0000035616" description="Enterotoxin type G">
    <location>
        <begin position="26"/>
        <end position="258"/>
    </location>
</feature>
<feature type="disulfide bond" evidence="1">
    <location>
        <begin position="116"/>
        <end position="133"/>
    </location>
</feature>
<feature type="helix" evidence="3">
    <location>
        <begin position="31"/>
        <end position="33"/>
    </location>
</feature>
<feature type="helix" evidence="3">
    <location>
        <begin position="37"/>
        <end position="42"/>
    </location>
</feature>
<feature type="helix" evidence="3">
    <location>
        <begin position="48"/>
        <end position="55"/>
    </location>
</feature>
<feature type="strand" evidence="3">
    <location>
        <begin position="59"/>
        <end position="64"/>
    </location>
</feature>
<feature type="strand" evidence="3">
    <location>
        <begin position="74"/>
        <end position="77"/>
    </location>
</feature>
<feature type="strand" evidence="3">
    <location>
        <begin position="87"/>
        <end position="90"/>
    </location>
</feature>
<feature type="helix" evidence="3">
    <location>
        <begin position="94"/>
        <end position="100"/>
    </location>
</feature>
<feature type="strand" evidence="3">
    <location>
        <begin position="105"/>
        <end position="109"/>
    </location>
</feature>
<feature type="strand" evidence="3">
    <location>
        <begin position="133"/>
        <end position="135"/>
    </location>
</feature>
<feature type="strand" evidence="3">
    <location>
        <begin position="138"/>
        <end position="140"/>
    </location>
</feature>
<feature type="strand" evidence="3">
    <location>
        <begin position="149"/>
        <end position="157"/>
    </location>
</feature>
<feature type="turn" evidence="3">
    <location>
        <begin position="158"/>
        <end position="160"/>
    </location>
</feature>
<feature type="strand" evidence="3">
    <location>
        <begin position="161"/>
        <end position="170"/>
    </location>
</feature>
<feature type="strand" evidence="3">
    <location>
        <begin position="172"/>
        <end position="175"/>
    </location>
</feature>
<feature type="helix" evidence="3">
    <location>
        <begin position="176"/>
        <end position="191"/>
    </location>
</feature>
<feature type="strand" evidence="3">
    <location>
        <begin position="200"/>
        <end position="209"/>
    </location>
</feature>
<feature type="strand" evidence="3">
    <location>
        <begin position="215"/>
        <end position="221"/>
    </location>
</feature>
<feature type="helix" evidence="3">
    <location>
        <begin position="231"/>
        <end position="233"/>
    </location>
</feature>
<feature type="helix" evidence="3">
    <location>
        <begin position="235"/>
        <end position="238"/>
    </location>
</feature>
<feature type="strand" evidence="3">
    <location>
        <begin position="243"/>
        <end position="245"/>
    </location>
</feature>
<feature type="turn" evidence="3">
    <location>
        <begin position="246"/>
        <end position="248"/>
    </location>
</feature>
<feature type="strand" evidence="3">
    <location>
        <begin position="250"/>
        <end position="256"/>
    </location>
</feature>
<dbReference type="EMBL" id="AF064773">
    <property type="protein sequence ID" value="AAC26660.1"/>
    <property type="molecule type" value="Genomic_DNA"/>
</dbReference>
<dbReference type="EMBL" id="AY961383">
    <property type="protein sequence ID" value="AAX84812.1"/>
    <property type="molecule type" value="Genomic_DNA"/>
</dbReference>
<dbReference type="EMBL" id="AY961384">
    <property type="protein sequence ID" value="AAX84813.1"/>
    <property type="molecule type" value="Genomic_DNA"/>
</dbReference>
<dbReference type="EMBL" id="AY961386">
    <property type="protein sequence ID" value="AAX84815.1"/>
    <property type="molecule type" value="Genomic_DNA"/>
</dbReference>
<dbReference type="RefSeq" id="WP_000736712.1">
    <property type="nucleotide sequence ID" value="NZ_WYDB01000002.1"/>
</dbReference>
<dbReference type="PDB" id="1XXG">
    <property type="method" value="X-ray"/>
    <property type="resolution" value="2.20 A"/>
    <property type="chains" value="A=26-258"/>
</dbReference>
<dbReference type="PDBsum" id="1XXG"/>
<dbReference type="SMR" id="P0A0L8"/>
<dbReference type="EvolutionaryTrace" id="P0A0L8"/>
<dbReference type="PRO" id="PR:P0A0L8"/>
<dbReference type="GO" id="GO:0005576">
    <property type="term" value="C:extracellular region"/>
    <property type="evidence" value="ECO:0007669"/>
    <property type="project" value="UniProtKB-SubCell"/>
</dbReference>
<dbReference type="GO" id="GO:0090729">
    <property type="term" value="F:toxin activity"/>
    <property type="evidence" value="ECO:0007669"/>
    <property type="project" value="UniProtKB-KW"/>
</dbReference>
<dbReference type="Gene3D" id="2.40.50.110">
    <property type="match status" value="1"/>
</dbReference>
<dbReference type="Gene3D" id="3.10.20.120">
    <property type="match status" value="1"/>
</dbReference>
<dbReference type="InterPro" id="IPR008992">
    <property type="entry name" value="Enterotoxin"/>
</dbReference>
<dbReference type="InterPro" id="IPR006126">
    <property type="entry name" value="Staph/Strept_toxin_CS"/>
</dbReference>
<dbReference type="InterPro" id="IPR006173">
    <property type="entry name" value="Staph_tox_OB"/>
</dbReference>
<dbReference type="InterPro" id="IPR016091">
    <property type="entry name" value="SuperAg_toxin_C"/>
</dbReference>
<dbReference type="InterPro" id="IPR013307">
    <property type="entry name" value="Superantigen_bac"/>
</dbReference>
<dbReference type="InterPro" id="IPR006123">
    <property type="entry name" value="Toxin_b-grasp_Staph/Strep"/>
</dbReference>
<dbReference type="InterPro" id="IPR006177">
    <property type="entry name" value="Toxin_bac"/>
</dbReference>
<dbReference type="Pfam" id="PF02876">
    <property type="entry name" value="Stap_Strp_tox_C"/>
    <property type="match status" value="1"/>
</dbReference>
<dbReference type="Pfam" id="PF01123">
    <property type="entry name" value="Stap_Strp_toxin"/>
    <property type="match status" value="1"/>
</dbReference>
<dbReference type="PRINTS" id="PR00279">
    <property type="entry name" value="BACTRLTOXIN"/>
</dbReference>
<dbReference type="PRINTS" id="PR01898">
    <property type="entry name" value="SAGSUPRFAMLY"/>
</dbReference>
<dbReference type="SUPFAM" id="SSF50203">
    <property type="entry name" value="Bacterial enterotoxins"/>
    <property type="match status" value="1"/>
</dbReference>
<dbReference type="SUPFAM" id="SSF54334">
    <property type="entry name" value="Superantigen toxins, C-terminal domain"/>
    <property type="match status" value="1"/>
</dbReference>
<dbReference type="PROSITE" id="PS00278">
    <property type="entry name" value="STAPH_STREP_TOXIN_2"/>
    <property type="match status" value="1"/>
</dbReference>
<reference key="1">
    <citation type="journal article" date="1998" name="Infect. Immun.">
        <title>Identification and characterization of staphylococcal enterotoxin types G and I from Staphylococcus aureus.</title>
        <authorList>
            <person name="Munson S.H."/>
            <person name="Tremaine M.T."/>
            <person name="Betley M.J."/>
            <person name="Welch R.A."/>
        </authorList>
    </citation>
    <scope>NUCLEOTIDE SEQUENCE [GENOMIC DNA]</scope>
    <scope>PARTIAL PROTEIN SEQUENCE</scope>
    <source>
        <strain>FRI572</strain>
    </source>
</reference>
<reference key="2">
    <citation type="journal article" date="2007" name="Proteins">
        <title>Superantigen natural affinity maturation revealed by the crystal structure of staphylococcal enterotoxin G and its binding to T-cell receptor Vbeta8.2.</title>
        <authorList>
            <person name="Fernandez M.M."/>
            <person name="Bhattacharya S."/>
            <person name="De Marzi M.C."/>
            <person name="Brown P.H."/>
            <person name="Kerzic M."/>
            <person name="Schuck P."/>
            <person name="Mariuzza R.A."/>
            <person name="Malchiodi E.L."/>
        </authorList>
    </citation>
    <scope>NUCLEOTIDE SEQUENCE [GENOMIC DNA] OF 26-258</scope>
    <scope>X-RAY CRYSTALLOGRAPHY (1.9 ANGSTROMS) OF 26-258</scope>
    <scope>DISULFIDE BOND</scope>
    <source>
        <strain>Fc30</strain>
        <strain>Fc35</strain>
        <strain>Fc65</strain>
    </source>
</reference>
<evidence type="ECO:0000269" key="1">
    <source>
    </source>
</evidence>
<evidence type="ECO:0000305" key="2"/>
<evidence type="ECO:0007829" key="3">
    <source>
        <dbReference type="PDB" id="1XXG"/>
    </source>
</evidence>
<gene>
    <name type="primary">entG</name>
    <name type="synonym">seg</name>
</gene>
<protein>
    <recommendedName>
        <fullName>Enterotoxin type G</fullName>
    </recommendedName>
    <alternativeName>
        <fullName>SEG</fullName>
    </alternativeName>
</protein>